<name>KDPB_BACCR</name>
<evidence type="ECO:0000255" key="1">
    <source>
        <dbReference type="HAMAP-Rule" id="MF_00285"/>
    </source>
</evidence>
<feature type="chain" id="PRO_1000022433" description="Potassium-transporting ATPase ATP-binding subunit">
    <location>
        <begin position="1"/>
        <end position="697"/>
    </location>
</feature>
<feature type="transmembrane region" description="Helical" evidence="1">
    <location>
        <begin position="55"/>
        <end position="75"/>
    </location>
</feature>
<feature type="transmembrane region" description="Helical" evidence="1">
    <location>
        <begin position="79"/>
        <end position="99"/>
    </location>
</feature>
<feature type="transmembrane region" description="Helical" evidence="1">
    <location>
        <begin position="245"/>
        <end position="265"/>
    </location>
</feature>
<feature type="transmembrane region" description="Helical" evidence="1">
    <location>
        <begin position="271"/>
        <end position="291"/>
    </location>
</feature>
<feature type="transmembrane region" description="Helical" evidence="1">
    <location>
        <begin position="605"/>
        <end position="625"/>
    </location>
</feature>
<feature type="transmembrane region" description="Helical" evidence="1">
    <location>
        <begin position="633"/>
        <end position="653"/>
    </location>
</feature>
<feature type="transmembrane region" description="Helical" evidence="1">
    <location>
        <begin position="677"/>
        <end position="697"/>
    </location>
</feature>
<feature type="active site" description="4-aspartylphosphate intermediate" evidence="1">
    <location>
        <position position="324"/>
    </location>
</feature>
<feature type="binding site" evidence="1">
    <location>
        <position position="361"/>
    </location>
    <ligand>
        <name>ATP</name>
        <dbReference type="ChEBI" id="CHEBI:30616"/>
    </ligand>
</feature>
<feature type="binding site" evidence="1">
    <location>
        <position position="365"/>
    </location>
    <ligand>
        <name>ATP</name>
        <dbReference type="ChEBI" id="CHEBI:30616"/>
    </ligand>
</feature>
<feature type="binding site" evidence="1">
    <location>
        <begin position="393"/>
        <end position="400"/>
    </location>
    <ligand>
        <name>ATP</name>
        <dbReference type="ChEBI" id="CHEBI:30616"/>
    </ligand>
</feature>
<feature type="binding site" evidence="1">
    <location>
        <position position="412"/>
    </location>
    <ligand>
        <name>ATP</name>
        <dbReference type="ChEBI" id="CHEBI:30616"/>
    </ligand>
</feature>
<feature type="binding site" evidence="1">
    <location>
        <position position="535"/>
    </location>
    <ligand>
        <name>Mg(2+)</name>
        <dbReference type="ChEBI" id="CHEBI:18420"/>
    </ligand>
</feature>
<feature type="binding site" evidence="1">
    <location>
        <position position="539"/>
    </location>
    <ligand>
        <name>Mg(2+)</name>
        <dbReference type="ChEBI" id="CHEBI:18420"/>
    </ligand>
</feature>
<accession>Q81HQ0</accession>
<dbReference type="EC" id="7.2.2.6" evidence="1"/>
<dbReference type="EMBL" id="AE016877">
    <property type="protein sequence ID" value="AAP07745.1"/>
    <property type="molecule type" value="Genomic_DNA"/>
</dbReference>
<dbReference type="RefSeq" id="NP_830544.1">
    <property type="nucleotide sequence ID" value="NC_004722.1"/>
</dbReference>
<dbReference type="SMR" id="Q81HQ0"/>
<dbReference type="STRING" id="226900.BC_0754"/>
<dbReference type="KEGG" id="bce:BC0754"/>
<dbReference type="PATRIC" id="fig|226900.8.peg.696"/>
<dbReference type="HOGENOM" id="CLU_025728_2_0_9"/>
<dbReference type="Proteomes" id="UP000001417">
    <property type="component" value="Chromosome"/>
</dbReference>
<dbReference type="GO" id="GO:0005886">
    <property type="term" value="C:plasma membrane"/>
    <property type="evidence" value="ECO:0000318"/>
    <property type="project" value="GO_Central"/>
</dbReference>
<dbReference type="GO" id="GO:0031004">
    <property type="term" value="C:potassium ion-transporting ATPase complex"/>
    <property type="evidence" value="ECO:0000318"/>
    <property type="project" value="GO_Central"/>
</dbReference>
<dbReference type="GO" id="GO:1903103">
    <property type="term" value="C:potassium:proton antiporter complex"/>
    <property type="evidence" value="ECO:0000318"/>
    <property type="project" value="GO_Central"/>
</dbReference>
<dbReference type="GO" id="GO:0005524">
    <property type="term" value="F:ATP binding"/>
    <property type="evidence" value="ECO:0007669"/>
    <property type="project" value="UniProtKB-UniRule"/>
</dbReference>
<dbReference type="GO" id="GO:0016887">
    <property type="term" value="F:ATP hydrolysis activity"/>
    <property type="evidence" value="ECO:0007669"/>
    <property type="project" value="InterPro"/>
</dbReference>
<dbReference type="GO" id="GO:0000287">
    <property type="term" value="F:magnesium ion binding"/>
    <property type="evidence" value="ECO:0007669"/>
    <property type="project" value="UniProtKB-UniRule"/>
</dbReference>
<dbReference type="GO" id="GO:0008556">
    <property type="term" value="F:P-type potassium transmembrane transporter activity"/>
    <property type="evidence" value="ECO:0000318"/>
    <property type="project" value="GO_Central"/>
</dbReference>
<dbReference type="GO" id="GO:0071805">
    <property type="term" value="P:potassium ion transmembrane transport"/>
    <property type="evidence" value="ECO:0000318"/>
    <property type="project" value="GO_Central"/>
</dbReference>
<dbReference type="CDD" id="cd02078">
    <property type="entry name" value="P-type_ATPase_K"/>
    <property type="match status" value="1"/>
</dbReference>
<dbReference type="FunFam" id="2.70.150.10:FF:000010">
    <property type="entry name" value="Potassium-transporting ATPase ATP-binding subunit"/>
    <property type="match status" value="1"/>
</dbReference>
<dbReference type="FunFam" id="3.40.1110.10:FF:000007">
    <property type="entry name" value="Potassium-transporting ATPase ATP-binding subunit"/>
    <property type="match status" value="1"/>
</dbReference>
<dbReference type="Gene3D" id="3.40.1110.10">
    <property type="entry name" value="Calcium-transporting ATPase, cytoplasmic domain N"/>
    <property type="match status" value="1"/>
</dbReference>
<dbReference type="Gene3D" id="2.70.150.10">
    <property type="entry name" value="Calcium-transporting ATPase, cytoplasmic transduction domain A"/>
    <property type="match status" value="1"/>
</dbReference>
<dbReference type="Gene3D" id="3.40.50.1000">
    <property type="entry name" value="HAD superfamily/HAD-like"/>
    <property type="match status" value="1"/>
</dbReference>
<dbReference type="HAMAP" id="MF_00285">
    <property type="entry name" value="KdpB"/>
    <property type="match status" value="1"/>
</dbReference>
<dbReference type="InterPro" id="IPR023299">
    <property type="entry name" value="ATPase_P-typ_cyto_dom_N"/>
</dbReference>
<dbReference type="InterPro" id="IPR018303">
    <property type="entry name" value="ATPase_P-typ_P_site"/>
</dbReference>
<dbReference type="InterPro" id="IPR023298">
    <property type="entry name" value="ATPase_P-typ_TM_dom_sf"/>
</dbReference>
<dbReference type="InterPro" id="IPR008250">
    <property type="entry name" value="ATPase_P-typ_transduc_dom_A_sf"/>
</dbReference>
<dbReference type="InterPro" id="IPR036412">
    <property type="entry name" value="HAD-like_sf"/>
</dbReference>
<dbReference type="InterPro" id="IPR023214">
    <property type="entry name" value="HAD_sf"/>
</dbReference>
<dbReference type="InterPro" id="IPR006391">
    <property type="entry name" value="P-type_ATPase_bsu_IA"/>
</dbReference>
<dbReference type="InterPro" id="IPR001757">
    <property type="entry name" value="P_typ_ATPase"/>
</dbReference>
<dbReference type="InterPro" id="IPR044492">
    <property type="entry name" value="P_typ_ATPase_HD_dom"/>
</dbReference>
<dbReference type="NCBIfam" id="TIGR01494">
    <property type="entry name" value="ATPase_P-type"/>
    <property type="match status" value="2"/>
</dbReference>
<dbReference type="NCBIfam" id="TIGR01497">
    <property type="entry name" value="kdpB"/>
    <property type="match status" value="1"/>
</dbReference>
<dbReference type="PANTHER" id="PTHR43743">
    <property type="entry name" value="POTASSIUM-TRANSPORTING ATPASE ATP-BINDING SUBUNIT"/>
    <property type="match status" value="1"/>
</dbReference>
<dbReference type="PANTHER" id="PTHR43743:SF1">
    <property type="entry name" value="POTASSIUM-TRANSPORTING ATPASE ATP-BINDING SUBUNIT"/>
    <property type="match status" value="1"/>
</dbReference>
<dbReference type="Pfam" id="PF00122">
    <property type="entry name" value="E1-E2_ATPase"/>
    <property type="match status" value="1"/>
</dbReference>
<dbReference type="Pfam" id="PF00702">
    <property type="entry name" value="Hydrolase"/>
    <property type="match status" value="1"/>
</dbReference>
<dbReference type="PRINTS" id="PR00119">
    <property type="entry name" value="CATATPASE"/>
</dbReference>
<dbReference type="SFLD" id="SFLDG00002">
    <property type="entry name" value="C1.7:_P-type_atpase_like"/>
    <property type="match status" value="1"/>
</dbReference>
<dbReference type="SFLD" id="SFLDF00027">
    <property type="entry name" value="p-type_atpase"/>
    <property type="match status" value="1"/>
</dbReference>
<dbReference type="SUPFAM" id="SSF81653">
    <property type="entry name" value="Calcium ATPase, transduction domain A"/>
    <property type="match status" value="1"/>
</dbReference>
<dbReference type="SUPFAM" id="SSF81665">
    <property type="entry name" value="Calcium ATPase, transmembrane domain M"/>
    <property type="match status" value="1"/>
</dbReference>
<dbReference type="SUPFAM" id="SSF56784">
    <property type="entry name" value="HAD-like"/>
    <property type="match status" value="1"/>
</dbReference>
<dbReference type="PROSITE" id="PS00154">
    <property type="entry name" value="ATPASE_E1_E2"/>
    <property type="match status" value="1"/>
</dbReference>
<protein>
    <recommendedName>
        <fullName evidence="1">Potassium-transporting ATPase ATP-binding subunit</fullName>
        <ecNumber evidence="1">7.2.2.6</ecNumber>
    </recommendedName>
    <alternativeName>
        <fullName evidence="1">ATP phosphohydrolase [potassium-transporting] B chain</fullName>
    </alternativeName>
    <alternativeName>
        <fullName evidence="1">Potassium-binding and translocating subunit B</fullName>
    </alternativeName>
    <alternativeName>
        <fullName evidence="1">Potassium-translocating ATPase B chain</fullName>
    </alternativeName>
</protein>
<comment type="function">
    <text evidence="1">Part of the high-affinity ATP-driven potassium transport (or Kdp) system, which catalyzes the hydrolysis of ATP coupled with the electrogenic transport of potassium into the cytoplasm. This subunit is responsible for energy coupling to the transport system and for the release of the potassium ions to the cytoplasm.</text>
</comment>
<comment type="catalytic activity">
    <reaction evidence="1">
        <text>K(+)(out) + ATP + H2O = K(+)(in) + ADP + phosphate + H(+)</text>
        <dbReference type="Rhea" id="RHEA:16777"/>
        <dbReference type="ChEBI" id="CHEBI:15377"/>
        <dbReference type="ChEBI" id="CHEBI:15378"/>
        <dbReference type="ChEBI" id="CHEBI:29103"/>
        <dbReference type="ChEBI" id="CHEBI:30616"/>
        <dbReference type="ChEBI" id="CHEBI:43474"/>
        <dbReference type="ChEBI" id="CHEBI:456216"/>
        <dbReference type="EC" id="7.2.2.6"/>
    </reaction>
    <physiologicalReaction direction="left-to-right" evidence="1">
        <dbReference type="Rhea" id="RHEA:16778"/>
    </physiologicalReaction>
</comment>
<comment type="subunit">
    <text evidence="1">The system is composed of three essential subunits: KdpA, KdpB and KdpC.</text>
</comment>
<comment type="subcellular location">
    <subcellularLocation>
        <location evidence="1">Cell membrane</location>
        <topology evidence="1">Multi-pass membrane protein</topology>
    </subcellularLocation>
</comment>
<comment type="similarity">
    <text evidence="1">Belongs to the cation transport ATPase (P-type) (TC 3.A.3) family. Type IA subfamily.</text>
</comment>
<gene>
    <name evidence="1" type="primary">kdpB</name>
    <name type="ordered locus">BC_0754</name>
</gene>
<keyword id="KW-0067">ATP-binding</keyword>
<keyword id="KW-1003">Cell membrane</keyword>
<keyword id="KW-0406">Ion transport</keyword>
<keyword id="KW-0460">Magnesium</keyword>
<keyword id="KW-0472">Membrane</keyword>
<keyword id="KW-0479">Metal-binding</keyword>
<keyword id="KW-0547">Nucleotide-binding</keyword>
<keyword id="KW-0597">Phosphoprotein</keyword>
<keyword id="KW-0630">Potassium</keyword>
<keyword id="KW-0633">Potassium transport</keyword>
<keyword id="KW-1185">Reference proteome</keyword>
<keyword id="KW-1278">Translocase</keyword>
<keyword id="KW-0812">Transmembrane</keyword>
<keyword id="KW-1133">Transmembrane helix</keyword>
<keyword id="KW-0813">Transport</keyword>
<reference key="1">
    <citation type="journal article" date="2003" name="Nature">
        <title>Genome sequence of Bacillus cereus and comparative analysis with Bacillus anthracis.</title>
        <authorList>
            <person name="Ivanova N."/>
            <person name="Sorokin A."/>
            <person name="Anderson I."/>
            <person name="Galleron N."/>
            <person name="Candelon B."/>
            <person name="Kapatral V."/>
            <person name="Bhattacharyya A."/>
            <person name="Reznik G."/>
            <person name="Mikhailova N."/>
            <person name="Lapidus A."/>
            <person name="Chu L."/>
            <person name="Mazur M."/>
            <person name="Goltsman E."/>
            <person name="Larsen N."/>
            <person name="D'Souza M."/>
            <person name="Walunas T."/>
            <person name="Grechkin Y."/>
            <person name="Pusch G."/>
            <person name="Haselkorn R."/>
            <person name="Fonstein M."/>
            <person name="Ehrlich S.D."/>
            <person name="Overbeek R."/>
            <person name="Kyrpides N.C."/>
        </authorList>
    </citation>
    <scope>NUCLEOTIDE SEQUENCE [LARGE SCALE GENOMIC DNA]</scope>
    <source>
        <strain>ATCC 14579 / DSM 31 / CCUG 7414 / JCM 2152 / NBRC 15305 / NCIMB 9373 / NCTC 2599 / NRRL B-3711</strain>
    </source>
</reference>
<organism>
    <name type="scientific">Bacillus cereus (strain ATCC 14579 / DSM 31 / CCUG 7414 / JCM 2152 / NBRC 15305 / NCIMB 9373 / NCTC 2599 / NRRL B-3711)</name>
    <dbReference type="NCBI Taxonomy" id="226900"/>
    <lineage>
        <taxon>Bacteria</taxon>
        <taxon>Bacillati</taxon>
        <taxon>Bacillota</taxon>
        <taxon>Bacilli</taxon>
        <taxon>Bacillales</taxon>
        <taxon>Bacillaceae</taxon>
        <taxon>Bacillus</taxon>
        <taxon>Bacillus cereus group</taxon>
    </lineage>
</organism>
<proteinExistence type="inferred from homology"/>
<sequence length="697" mass="74451">MMRPVVVKEKQLNESQIHAVEDEVRQAKTMDRDIVTHAMKQSVAKLNPKVMIKNPIMFVVEIGFIITFILSFLPSSSSSIPGWFNITVSLILLFTVLFANFAEALAEGRGKAQADSLKQSKKDVFANVVKENGDIVQVSATDLRKGDVVIVKQGEMIPSDGEVIKGLASVDESAITGESAPVIKEAGGDFCSVTGGTMVVSDEITIVITSNPGESFIDKMISLVEGAARQKTPNEIALNTVLTSLTLIFLIVVVTLPIFTNYLGFQIDTAVLVALLVCLIPTTIGGLLSAIGIAGMDRVTKFNVLAMSGKAVEAAGDINTIILDKTGTITFGNRMAHTLLPVGNETIEQVGKWAAISSVLDETPEGRSVIEYVQGKSISYNRELAEQGEFVPFKAETRMSGVDLQDGTKVRKGAVGSVIEWVQSQGGTIPKDVNQKADFISKEGGTPLVVAVNNRIYGLIYLKDTVKPGMRERFEQLRQMGIKTVMCTGDNPLTAATIAKEAGVDEFVAECKPEDKIAVIKAEQDKGKLVAMTGDGTNDAPALAQADVGLAMNSGTTAAKEAANMIDLDSNPTKIIEVVGIGKQLLMTRGALTTFSIANDIAKYFAIIPAMFTLAIPQMEALNIMKLTSPLSAILSALIFNAVIIPLLIPLAMKGIAYKPMSSNALLSRNLLIYGLGGVIVPFIGIKVIDIIVGLFI</sequence>